<feature type="chain" id="PRO_0000389504" description="Limonene hydroxylase">
    <location>
        <begin position="1"/>
        <end position="543"/>
    </location>
</feature>
<feature type="domain" description="Sigma-54 factor interaction" evidence="1">
    <location>
        <begin position="232"/>
        <end position="464"/>
    </location>
</feature>
<feature type="binding site" evidence="1">
    <location>
        <begin position="260"/>
        <end position="267"/>
    </location>
    <ligand>
        <name>ATP</name>
        <dbReference type="ChEBI" id="CHEBI:30616"/>
    </ligand>
</feature>
<feature type="binding site" evidence="1">
    <location>
        <begin position="324"/>
        <end position="333"/>
    </location>
    <ligand>
        <name>ATP</name>
        <dbReference type="ChEBI" id="CHEBI:30616"/>
    </ligand>
</feature>
<name>LIHY_GEOSE</name>
<protein>
    <recommendedName>
        <fullName>Limonene hydroxylase</fullName>
    </recommendedName>
    <alternativeName>
        <fullName>(S)-limonene 6-monooxygenase</fullName>
        <ecNumber evidence="2">1.14.14.51</ecNumber>
    </alternativeName>
    <alternativeName>
        <fullName>(S)-limonene 7-monooxygenase</fullName>
        <ecNumber evidence="2">1.14.14.52</ecNumber>
    </alternativeName>
    <alternativeName>
        <fullName>Carveol dehydrogenase</fullName>
        <ecNumber evidence="2">1.1.1.243</ecNumber>
    </alternativeName>
    <alternativeName>
        <fullName>Perillyl-alcohol dehydrogenase</fullName>
        <ecNumber evidence="2">1.1.1.144</ecNumber>
    </alternativeName>
</protein>
<reference key="1">
    <citation type="journal article" date="2000" name="Appl. Biochem. Biotechnol.">
        <title>Cloning and expression of the limonene hydroxylase of Bacillus stearothermophilus BR388 and utilization in two-phase limonene conversions.</title>
        <authorList>
            <person name="Cheong T.K."/>
            <person name="Oriel P.J."/>
        </authorList>
    </citation>
    <scope>NUCLEOTIDE SEQUENCE [GENOMIC DNA]</scope>
    <scope>FUNCTION</scope>
    <scope>CATALYTIC ACTIVITY</scope>
    <scope>BIOPHYSICOCHEMICAL PROPERTIES</scope>
    <source>
        <strain>BR388</strain>
    </source>
</reference>
<sequence>MGSKYAAGHYSCSSYFQSLDIPENRQFVQGMKKRYGQDTVISSVMANTYSGIQMILEAIVHLRSTDRKKILNYLYNKTFPSPSGNITIESNHHLSREVRIGQANLDGQFDIVWSSEQPIPAKPLMTNTIIDSANEEQIWKYVVESMGEETADGVLVLDQDQTILYANSAAYSFLRVKQGDILKEEQLREISHQLIKKETSKYGVQLFIFKRAKRGPLLVTKPDKEPYRFGRVVTYNPSFEKELRTASIASQSDANVLILGETGSGKEVLARTIHEQSPRRNGPFVALNAGAIPRELIASELFGYVEGAFTGARKGGRPGKFEVADGGTLFLDEIGDMPLELQVNLLRVLEERKVIRIGDHKERPINVRVIAATNRNLKEEIAYRGSFRSDLYYRLNVFTIHIPPLRDRKEDIETLSLQFLKNFHQHYCGKGTCHLSNSALQLLQSYNWPGNIRELRNVIERAFLLAIDEPEILPIHLPEEIQNANCAIPPSSVNNLKDVEKKMIEQALKESKSLTEAAKKLGITRSTLYRKIKQWKIHKTTFS</sequence>
<organism>
    <name type="scientific">Geobacillus stearothermophilus</name>
    <name type="common">Bacillus stearothermophilus</name>
    <dbReference type="NCBI Taxonomy" id="1422"/>
    <lineage>
        <taxon>Bacteria</taxon>
        <taxon>Bacillati</taxon>
        <taxon>Bacillota</taxon>
        <taxon>Bacilli</taxon>
        <taxon>Bacillales</taxon>
        <taxon>Anoxybacillaceae</taxon>
        <taxon>Geobacillus</taxon>
    </lineage>
</organism>
<evidence type="ECO:0000255" key="1">
    <source>
        <dbReference type="PROSITE-ProRule" id="PRU00193"/>
    </source>
</evidence>
<evidence type="ECO:0000269" key="2">
    <source>
    </source>
</evidence>
<proteinExistence type="evidence at protein level"/>
<accession>O85057</accession>
<comment type="function">
    <text evidence="2">Involved in limonene hydroxylation to a mixture of carveol and perillyl alcohol as well as in dehydrogenation of these products to carvone and perillyl aldehyde. Aromatic alcohols containing an isopropyl or isopropenyl group at ring position 4 also served as substrates for the dehydrogenase activity.</text>
</comment>
<comment type="catalytic activity">
    <reaction evidence="2">
        <text>(4S)-limonene + reduced [NADPH--hemoprotein reductase] + O2 = (1S,5R)-carveol + oxidized [NADPH--hemoprotein reductase] + H2O + H(+)</text>
        <dbReference type="Rhea" id="RHEA:17945"/>
        <dbReference type="Rhea" id="RHEA-COMP:11964"/>
        <dbReference type="Rhea" id="RHEA-COMP:11965"/>
        <dbReference type="ChEBI" id="CHEBI:15377"/>
        <dbReference type="ChEBI" id="CHEBI:15378"/>
        <dbReference type="ChEBI" id="CHEBI:15379"/>
        <dbReference type="ChEBI" id="CHEBI:15383"/>
        <dbReference type="ChEBI" id="CHEBI:15389"/>
        <dbReference type="ChEBI" id="CHEBI:57618"/>
        <dbReference type="ChEBI" id="CHEBI:58210"/>
        <dbReference type="EC" id="1.14.14.51"/>
    </reaction>
</comment>
<comment type="catalytic activity">
    <reaction evidence="2">
        <text>(4S)-limonene + reduced [NADPH--hemoprotein reductase] + O2 = (4S)-perillyl alcohol + oxidized [NADPH--hemoprotein reductase] + H2O + H(+)</text>
        <dbReference type="Rhea" id="RHEA:23432"/>
        <dbReference type="Rhea" id="RHEA-COMP:11964"/>
        <dbReference type="Rhea" id="RHEA-COMP:11965"/>
        <dbReference type="ChEBI" id="CHEBI:10782"/>
        <dbReference type="ChEBI" id="CHEBI:15377"/>
        <dbReference type="ChEBI" id="CHEBI:15378"/>
        <dbReference type="ChEBI" id="CHEBI:15379"/>
        <dbReference type="ChEBI" id="CHEBI:15383"/>
        <dbReference type="ChEBI" id="CHEBI:57618"/>
        <dbReference type="ChEBI" id="CHEBI:58210"/>
        <dbReference type="EC" id="1.14.14.52"/>
    </reaction>
</comment>
<comment type="catalytic activity">
    <reaction evidence="2">
        <text>perillyl alcohol + NAD(+) = perillyl aldehyde + NADH + H(+)</text>
        <dbReference type="Rhea" id="RHEA:10664"/>
        <dbReference type="ChEBI" id="CHEBI:15378"/>
        <dbReference type="ChEBI" id="CHEBI:15420"/>
        <dbReference type="ChEBI" id="CHEBI:15421"/>
        <dbReference type="ChEBI" id="CHEBI:57540"/>
        <dbReference type="ChEBI" id="CHEBI:57945"/>
        <dbReference type="EC" id="1.1.1.144"/>
    </reaction>
</comment>
<comment type="catalytic activity">
    <reaction evidence="2">
        <text>(1S,5R)-carveol + NADP(+) = (R)-carvone + NADPH + H(+)</text>
        <dbReference type="Rhea" id="RHEA:13629"/>
        <dbReference type="ChEBI" id="CHEBI:15378"/>
        <dbReference type="ChEBI" id="CHEBI:15389"/>
        <dbReference type="ChEBI" id="CHEBI:15400"/>
        <dbReference type="ChEBI" id="CHEBI:57783"/>
        <dbReference type="ChEBI" id="CHEBI:58349"/>
        <dbReference type="EC" id="1.1.1.243"/>
    </reaction>
</comment>
<comment type="biophysicochemical properties">
    <phDependence>
        <text evidence="2">Optimum pH is 7.7.</text>
    </phDependence>
    <temperatureDependence>
        <text evidence="2">Optimum temperature is 45 degrees Celsius.</text>
    </temperatureDependence>
</comment>
<comment type="miscellaneous">
    <text>Oxygen, FAD, and NADH stimulate the hydroxylation reaction, while NAD(+) stimulates the dehydrogenase reaction.</text>
</comment>
<dbReference type="EC" id="1.14.14.51" evidence="2"/>
<dbReference type="EC" id="1.14.14.52" evidence="2"/>
<dbReference type="EC" id="1.1.1.243" evidence="2"/>
<dbReference type="EC" id="1.1.1.144" evidence="2"/>
<dbReference type="EMBL" id="AF039527">
    <property type="protein sequence ID" value="AAC25032.1"/>
    <property type="molecule type" value="Genomic_DNA"/>
</dbReference>
<dbReference type="SMR" id="O85057"/>
<dbReference type="KEGG" id="ag:AAC25032"/>
<dbReference type="BioCyc" id="MetaCyc:MONOMER-15696"/>
<dbReference type="BRENDA" id="1.14.14.51">
    <property type="organism ID" value="623"/>
</dbReference>
<dbReference type="GO" id="GO:0018675">
    <property type="term" value="F:(S)-limonene 6-monooxygenase activity"/>
    <property type="evidence" value="ECO:0007669"/>
    <property type="project" value="UniProtKB-EC"/>
</dbReference>
<dbReference type="GO" id="GO:0018676">
    <property type="term" value="F:(S)-limonene 7-monooxygenase activity"/>
    <property type="evidence" value="ECO:0007669"/>
    <property type="project" value="UniProtKB-EC"/>
</dbReference>
<dbReference type="GO" id="GO:0005524">
    <property type="term" value="F:ATP binding"/>
    <property type="evidence" value="ECO:0007669"/>
    <property type="project" value="UniProtKB-KW"/>
</dbReference>
<dbReference type="GO" id="GO:0016887">
    <property type="term" value="F:ATP hydrolysis activity"/>
    <property type="evidence" value="ECO:0007669"/>
    <property type="project" value="InterPro"/>
</dbReference>
<dbReference type="GO" id="GO:0018459">
    <property type="term" value="F:carveol dehydrogenase activity"/>
    <property type="evidence" value="ECO:0007669"/>
    <property type="project" value="UniProtKB-EC"/>
</dbReference>
<dbReference type="GO" id="GO:0018457">
    <property type="term" value="F:perillyl-alcohol dehydrogenase (NAD+) activity"/>
    <property type="evidence" value="ECO:0007669"/>
    <property type="project" value="UniProtKB-EC"/>
</dbReference>
<dbReference type="GO" id="GO:0043565">
    <property type="term" value="F:sequence-specific DNA binding"/>
    <property type="evidence" value="ECO:0007669"/>
    <property type="project" value="InterPro"/>
</dbReference>
<dbReference type="GO" id="GO:0006355">
    <property type="term" value="P:regulation of DNA-templated transcription"/>
    <property type="evidence" value="ECO:0007669"/>
    <property type="project" value="InterPro"/>
</dbReference>
<dbReference type="CDD" id="cd00009">
    <property type="entry name" value="AAA"/>
    <property type="match status" value="1"/>
</dbReference>
<dbReference type="FunFam" id="3.40.50.300:FF:000006">
    <property type="entry name" value="DNA-binding transcriptional regulator NtrC"/>
    <property type="match status" value="1"/>
</dbReference>
<dbReference type="Gene3D" id="1.10.8.60">
    <property type="match status" value="1"/>
</dbReference>
<dbReference type="Gene3D" id="3.40.50.2300">
    <property type="match status" value="2"/>
</dbReference>
<dbReference type="Gene3D" id="1.10.10.60">
    <property type="entry name" value="Homeodomain-like"/>
    <property type="match status" value="1"/>
</dbReference>
<dbReference type="Gene3D" id="3.40.50.300">
    <property type="entry name" value="P-loop containing nucleotide triphosphate hydrolases"/>
    <property type="match status" value="1"/>
</dbReference>
<dbReference type="Gene3D" id="3.30.450.20">
    <property type="entry name" value="PAS domain"/>
    <property type="match status" value="1"/>
</dbReference>
<dbReference type="InterPro" id="IPR003593">
    <property type="entry name" value="AAA+_ATPase"/>
</dbReference>
<dbReference type="InterPro" id="IPR009057">
    <property type="entry name" value="Homeodomain-like_sf"/>
</dbReference>
<dbReference type="InterPro" id="IPR002197">
    <property type="entry name" value="HTH_Fis"/>
</dbReference>
<dbReference type="InterPro" id="IPR027417">
    <property type="entry name" value="P-loop_NTPase"/>
</dbReference>
<dbReference type="InterPro" id="IPR000014">
    <property type="entry name" value="PAS"/>
</dbReference>
<dbReference type="InterPro" id="IPR028082">
    <property type="entry name" value="Peripla_BP_I"/>
</dbReference>
<dbReference type="InterPro" id="IPR002078">
    <property type="entry name" value="Sigma_54_int"/>
</dbReference>
<dbReference type="InterPro" id="IPR025662">
    <property type="entry name" value="Sigma_54_int_dom_ATP-bd_1"/>
</dbReference>
<dbReference type="InterPro" id="IPR025943">
    <property type="entry name" value="Sigma_54_int_dom_ATP-bd_2"/>
</dbReference>
<dbReference type="InterPro" id="IPR025944">
    <property type="entry name" value="Sigma_54_int_dom_CS"/>
</dbReference>
<dbReference type="PANTHER" id="PTHR32071:SF57">
    <property type="entry name" value="C4-DICARBOXYLATE TRANSPORT TRANSCRIPTIONAL REGULATORY PROTEIN DCTD"/>
    <property type="match status" value="1"/>
</dbReference>
<dbReference type="PANTHER" id="PTHR32071">
    <property type="entry name" value="TRANSCRIPTIONAL REGULATORY PROTEIN"/>
    <property type="match status" value="1"/>
</dbReference>
<dbReference type="Pfam" id="PF02954">
    <property type="entry name" value="HTH_8"/>
    <property type="match status" value="1"/>
</dbReference>
<dbReference type="Pfam" id="PF13188">
    <property type="entry name" value="PAS_8"/>
    <property type="match status" value="1"/>
</dbReference>
<dbReference type="Pfam" id="PF13433">
    <property type="entry name" value="Peripla_BP_5"/>
    <property type="match status" value="1"/>
</dbReference>
<dbReference type="Pfam" id="PF00158">
    <property type="entry name" value="Sigma54_activat"/>
    <property type="match status" value="1"/>
</dbReference>
<dbReference type="SMART" id="SM00382">
    <property type="entry name" value="AAA"/>
    <property type="match status" value="1"/>
</dbReference>
<dbReference type="SUPFAM" id="SSF46689">
    <property type="entry name" value="Homeodomain-like"/>
    <property type="match status" value="1"/>
</dbReference>
<dbReference type="SUPFAM" id="SSF52540">
    <property type="entry name" value="P-loop containing nucleoside triphosphate hydrolases"/>
    <property type="match status" value="1"/>
</dbReference>
<dbReference type="SUPFAM" id="SSF53822">
    <property type="entry name" value="Periplasmic binding protein-like I"/>
    <property type="match status" value="1"/>
</dbReference>
<dbReference type="PROSITE" id="PS00675">
    <property type="entry name" value="SIGMA54_INTERACT_1"/>
    <property type="match status" value="1"/>
</dbReference>
<dbReference type="PROSITE" id="PS00676">
    <property type="entry name" value="SIGMA54_INTERACT_2"/>
    <property type="match status" value="1"/>
</dbReference>
<dbReference type="PROSITE" id="PS00688">
    <property type="entry name" value="SIGMA54_INTERACT_3"/>
    <property type="match status" value="1"/>
</dbReference>
<dbReference type="PROSITE" id="PS50045">
    <property type="entry name" value="SIGMA54_INTERACT_4"/>
    <property type="match status" value="1"/>
</dbReference>
<keyword id="KW-0067">ATP-binding</keyword>
<keyword id="KW-0238">DNA-binding</keyword>
<keyword id="KW-0274">FAD</keyword>
<keyword id="KW-0285">Flavoprotein</keyword>
<keyword id="KW-0520">NAD</keyword>
<keyword id="KW-0521">NADP</keyword>
<keyword id="KW-0547">Nucleotide-binding</keyword>
<keyword id="KW-0560">Oxidoreductase</keyword>
<keyword id="KW-0804">Transcription</keyword>
<keyword id="KW-0805">Transcription regulation</keyword>